<dbReference type="EMBL" id="AB067731">
    <property type="protein sequence ID" value="BAC54031.1"/>
    <property type="molecule type" value="mRNA"/>
</dbReference>
<dbReference type="EMBL" id="CT027796">
    <property type="status" value="NOT_ANNOTATED_CDS"/>
    <property type="molecule type" value="Genomic_DNA"/>
</dbReference>
<dbReference type="EMBL" id="BC162069">
    <property type="protein sequence ID" value="AAI62069.1"/>
    <property type="molecule type" value="mRNA"/>
</dbReference>
<dbReference type="EMBL" id="BC162454">
    <property type="protein sequence ID" value="AAI62454.1"/>
    <property type="molecule type" value="mRNA"/>
</dbReference>
<dbReference type="RefSeq" id="NP_840087.1">
    <property type="nucleotide sequence ID" value="NM_178302.2"/>
</dbReference>
<dbReference type="SMR" id="F1R2J1"/>
<dbReference type="STRING" id="7955.ENSDARP00000034835"/>
<dbReference type="PaxDb" id="7955-ENSDARP00000034835"/>
<dbReference type="Ensembl" id="ENSDART00000030709">
    <property type="protein sequence ID" value="ENSDARP00000034835"/>
    <property type="gene ID" value="ENSDARG00000025899"/>
</dbReference>
<dbReference type="GeneID" id="352939"/>
<dbReference type="KEGG" id="dre:352939"/>
<dbReference type="AGR" id="ZFIN:ZDB-GENE-030328-42"/>
<dbReference type="CTD" id="352939"/>
<dbReference type="ZFIN" id="ZDB-GENE-030328-42">
    <property type="gene designation" value="pnx"/>
</dbReference>
<dbReference type="eggNOG" id="KOG0489">
    <property type="taxonomic scope" value="Eukaryota"/>
</dbReference>
<dbReference type="HOGENOM" id="CLU_127172_0_0_1"/>
<dbReference type="InParanoid" id="F1R2J1"/>
<dbReference type="OMA" id="DSSTEWP"/>
<dbReference type="OrthoDB" id="6159439at2759"/>
<dbReference type="PhylomeDB" id="F1R2J1"/>
<dbReference type="TreeFam" id="TF315720"/>
<dbReference type="PRO" id="PR:F1R2J1"/>
<dbReference type="Proteomes" id="UP000000437">
    <property type="component" value="Chromosome 10"/>
</dbReference>
<dbReference type="Bgee" id="ENSDARG00000025899">
    <property type="expression patterns" value="Expressed in gastrula and 9 other cell types or tissues"/>
</dbReference>
<dbReference type="GO" id="GO:0005634">
    <property type="term" value="C:nucleus"/>
    <property type="evidence" value="ECO:0000318"/>
    <property type="project" value="GO_Central"/>
</dbReference>
<dbReference type="GO" id="GO:0000981">
    <property type="term" value="F:DNA-binding transcription factor activity, RNA polymerase II-specific"/>
    <property type="evidence" value="ECO:0000318"/>
    <property type="project" value="GO_Central"/>
</dbReference>
<dbReference type="GO" id="GO:0000978">
    <property type="term" value="F:RNA polymerase II cis-regulatory region sequence-specific DNA binding"/>
    <property type="evidence" value="ECO:0000318"/>
    <property type="project" value="GO_Central"/>
</dbReference>
<dbReference type="GO" id="GO:0030154">
    <property type="term" value="P:cell differentiation"/>
    <property type="evidence" value="ECO:0000318"/>
    <property type="project" value="GO_Central"/>
</dbReference>
<dbReference type="GO" id="GO:0045892">
    <property type="term" value="P:negative regulation of DNA-templated transcription"/>
    <property type="evidence" value="ECO:0000314"/>
    <property type="project" value="ZFIN"/>
</dbReference>
<dbReference type="GO" id="GO:0007399">
    <property type="term" value="P:nervous system development"/>
    <property type="evidence" value="ECO:0007669"/>
    <property type="project" value="UniProtKB-KW"/>
</dbReference>
<dbReference type="GO" id="GO:0050767">
    <property type="term" value="P:regulation of neurogenesis"/>
    <property type="evidence" value="ECO:0000315"/>
    <property type="project" value="ZFIN"/>
</dbReference>
<dbReference type="GO" id="GO:0006357">
    <property type="term" value="P:regulation of transcription by RNA polymerase II"/>
    <property type="evidence" value="ECO:0000318"/>
    <property type="project" value="GO_Central"/>
</dbReference>
<dbReference type="CDD" id="cd00086">
    <property type="entry name" value="homeodomain"/>
    <property type="match status" value="1"/>
</dbReference>
<dbReference type="Gene3D" id="1.10.10.60">
    <property type="entry name" value="Homeodomain-like"/>
    <property type="match status" value="1"/>
</dbReference>
<dbReference type="InterPro" id="IPR001356">
    <property type="entry name" value="HD"/>
</dbReference>
<dbReference type="InterPro" id="IPR020479">
    <property type="entry name" value="HD_metazoa"/>
</dbReference>
<dbReference type="InterPro" id="IPR017970">
    <property type="entry name" value="Homeobox_CS"/>
</dbReference>
<dbReference type="InterPro" id="IPR050394">
    <property type="entry name" value="Homeobox_NK-like"/>
</dbReference>
<dbReference type="InterPro" id="IPR009057">
    <property type="entry name" value="Homeodomain-like_sf"/>
</dbReference>
<dbReference type="InterPro" id="IPR000047">
    <property type="entry name" value="HTH_motif"/>
</dbReference>
<dbReference type="PANTHER" id="PTHR24340">
    <property type="entry name" value="HOMEOBOX PROTEIN NKX"/>
    <property type="match status" value="1"/>
</dbReference>
<dbReference type="PANTHER" id="PTHR24340:SF106">
    <property type="entry name" value="HOMEOBOX PROTEIN PNX"/>
    <property type="match status" value="1"/>
</dbReference>
<dbReference type="Pfam" id="PF00046">
    <property type="entry name" value="Homeodomain"/>
    <property type="match status" value="1"/>
</dbReference>
<dbReference type="PRINTS" id="PR00024">
    <property type="entry name" value="HOMEOBOX"/>
</dbReference>
<dbReference type="PRINTS" id="PR00031">
    <property type="entry name" value="HTHREPRESSR"/>
</dbReference>
<dbReference type="SMART" id="SM00389">
    <property type="entry name" value="HOX"/>
    <property type="match status" value="1"/>
</dbReference>
<dbReference type="SUPFAM" id="SSF46689">
    <property type="entry name" value="Homeodomain-like"/>
    <property type="match status" value="1"/>
</dbReference>
<dbReference type="PROSITE" id="PS00027">
    <property type="entry name" value="HOMEOBOX_1"/>
    <property type="match status" value="1"/>
</dbReference>
<dbReference type="PROSITE" id="PS50071">
    <property type="entry name" value="HOMEOBOX_2"/>
    <property type="match status" value="1"/>
</dbReference>
<reference evidence="9" key="1">
    <citation type="journal article" date="2003" name="Development">
        <title>A homeobox gene, pnx, is involved in the formation of posterior neurons in zebrafish.</title>
        <authorList>
            <person name="Bae Y.B."/>
            <person name="Shimizu T."/>
            <person name="Yabe T."/>
            <person name="Kim C."/>
            <person name="Hirata T."/>
            <person name="Nojima H."/>
            <person name="Muraoka O."/>
            <person name="Hirano T."/>
            <person name="Hibi M."/>
        </authorList>
    </citation>
    <scope>NUCLEOTIDE SEQUENCE [MRNA]</scope>
    <scope>FUNCTION</scope>
    <scope>INTERACTION WITH TLE3A</scope>
    <scope>SUBCELLULAR LOCATION</scope>
    <scope>DEVELOPMENTAL STAGE</scope>
    <scope>DISRUPTION PHENOTYPE</scope>
</reference>
<reference evidence="10" key="2">
    <citation type="journal article" date="2013" name="Nature">
        <title>The zebrafish reference genome sequence and its relationship to the human genome.</title>
        <authorList>
            <person name="Howe K."/>
            <person name="Clark M.D."/>
            <person name="Torroja C.F."/>
            <person name="Torrance J."/>
            <person name="Berthelot C."/>
            <person name="Muffato M."/>
            <person name="Collins J.E."/>
            <person name="Humphray S."/>
            <person name="McLaren K."/>
            <person name="Matthews L."/>
            <person name="McLaren S."/>
            <person name="Sealy I."/>
            <person name="Caccamo M."/>
            <person name="Churcher C."/>
            <person name="Scott C."/>
            <person name="Barrett J.C."/>
            <person name="Koch R."/>
            <person name="Rauch G.J."/>
            <person name="White S."/>
            <person name="Chow W."/>
            <person name="Kilian B."/>
            <person name="Quintais L.T."/>
            <person name="Guerra-Assuncao J.A."/>
            <person name="Zhou Y."/>
            <person name="Gu Y."/>
            <person name="Yen J."/>
            <person name="Vogel J.H."/>
            <person name="Eyre T."/>
            <person name="Redmond S."/>
            <person name="Banerjee R."/>
            <person name="Chi J."/>
            <person name="Fu B."/>
            <person name="Langley E."/>
            <person name="Maguire S.F."/>
            <person name="Laird G.K."/>
            <person name="Lloyd D."/>
            <person name="Kenyon E."/>
            <person name="Donaldson S."/>
            <person name="Sehra H."/>
            <person name="Almeida-King J."/>
            <person name="Loveland J."/>
            <person name="Trevanion S."/>
            <person name="Jones M."/>
            <person name="Quail M."/>
            <person name="Willey D."/>
            <person name="Hunt A."/>
            <person name="Burton J."/>
            <person name="Sims S."/>
            <person name="McLay K."/>
            <person name="Plumb B."/>
            <person name="Davis J."/>
            <person name="Clee C."/>
            <person name="Oliver K."/>
            <person name="Clark R."/>
            <person name="Riddle C."/>
            <person name="Elliot D."/>
            <person name="Threadgold G."/>
            <person name="Harden G."/>
            <person name="Ware D."/>
            <person name="Begum S."/>
            <person name="Mortimore B."/>
            <person name="Kerry G."/>
            <person name="Heath P."/>
            <person name="Phillimore B."/>
            <person name="Tracey A."/>
            <person name="Corby N."/>
            <person name="Dunn M."/>
            <person name="Johnson C."/>
            <person name="Wood J."/>
            <person name="Clark S."/>
            <person name="Pelan S."/>
            <person name="Griffiths G."/>
            <person name="Smith M."/>
            <person name="Glithero R."/>
            <person name="Howden P."/>
            <person name="Barker N."/>
            <person name="Lloyd C."/>
            <person name="Stevens C."/>
            <person name="Harley J."/>
            <person name="Holt K."/>
            <person name="Panagiotidis G."/>
            <person name="Lovell J."/>
            <person name="Beasley H."/>
            <person name="Henderson C."/>
            <person name="Gordon D."/>
            <person name="Auger K."/>
            <person name="Wright D."/>
            <person name="Collins J."/>
            <person name="Raisen C."/>
            <person name="Dyer L."/>
            <person name="Leung K."/>
            <person name="Robertson L."/>
            <person name="Ambridge K."/>
            <person name="Leongamornlert D."/>
            <person name="McGuire S."/>
            <person name="Gilderthorp R."/>
            <person name="Griffiths C."/>
            <person name="Manthravadi D."/>
            <person name="Nichol S."/>
            <person name="Barker G."/>
            <person name="Whitehead S."/>
            <person name="Kay M."/>
            <person name="Brown J."/>
            <person name="Murnane C."/>
            <person name="Gray E."/>
            <person name="Humphries M."/>
            <person name="Sycamore N."/>
            <person name="Barker D."/>
            <person name="Saunders D."/>
            <person name="Wallis J."/>
            <person name="Babbage A."/>
            <person name="Hammond S."/>
            <person name="Mashreghi-Mohammadi M."/>
            <person name="Barr L."/>
            <person name="Martin S."/>
            <person name="Wray P."/>
            <person name="Ellington A."/>
            <person name="Matthews N."/>
            <person name="Ellwood M."/>
            <person name="Woodmansey R."/>
            <person name="Clark G."/>
            <person name="Cooper J."/>
            <person name="Tromans A."/>
            <person name="Grafham D."/>
            <person name="Skuce C."/>
            <person name="Pandian R."/>
            <person name="Andrews R."/>
            <person name="Harrison E."/>
            <person name="Kimberley A."/>
            <person name="Garnett J."/>
            <person name="Fosker N."/>
            <person name="Hall R."/>
            <person name="Garner P."/>
            <person name="Kelly D."/>
            <person name="Bird C."/>
            <person name="Palmer S."/>
            <person name="Gehring I."/>
            <person name="Berger A."/>
            <person name="Dooley C.M."/>
            <person name="Ersan-Urun Z."/>
            <person name="Eser C."/>
            <person name="Geiger H."/>
            <person name="Geisler M."/>
            <person name="Karotki L."/>
            <person name="Kirn A."/>
            <person name="Konantz J."/>
            <person name="Konantz M."/>
            <person name="Oberlander M."/>
            <person name="Rudolph-Geiger S."/>
            <person name="Teucke M."/>
            <person name="Lanz C."/>
            <person name="Raddatz G."/>
            <person name="Osoegawa K."/>
            <person name="Zhu B."/>
            <person name="Rapp A."/>
            <person name="Widaa S."/>
            <person name="Langford C."/>
            <person name="Yang F."/>
            <person name="Schuster S.C."/>
            <person name="Carter N.P."/>
            <person name="Harrow J."/>
            <person name="Ning Z."/>
            <person name="Herrero J."/>
            <person name="Searle S.M."/>
            <person name="Enright A."/>
            <person name="Geisler R."/>
            <person name="Plasterk R.H."/>
            <person name="Lee C."/>
            <person name="Westerfield M."/>
            <person name="de Jong P.J."/>
            <person name="Zon L.I."/>
            <person name="Postlethwait J.H."/>
            <person name="Nusslein-Volhard C."/>
            <person name="Hubbard T.J."/>
            <person name="Roest Crollius H."/>
            <person name="Rogers J."/>
            <person name="Stemple D.L."/>
        </authorList>
    </citation>
    <scope>NUCLEOTIDE SEQUENCE [LARGE SCALE GENOMIC DNA]</scope>
    <source>
        <strain evidence="10">Tuebingen</strain>
    </source>
</reference>
<reference evidence="8" key="3">
    <citation type="submission" date="2008-04" db="EMBL/GenBank/DDBJ databases">
        <authorList>
            <consortium name="NIH - Zebrafish Gene Collection (ZGC) project"/>
        </authorList>
    </citation>
    <scope>NUCLEOTIDE SEQUENCE [LARGE SCALE MRNA]</scope>
</reference>
<name>PNX_DANRE</name>
<protein>
    <recommendedName>
        <fullName evidence="6">Homeobox protein pnx</fullName>
    </recommendedName>
    <alternativeName>
        <fullName evidence="6">Posterior neuron-specific homeobox</fullName>
    </alternativeName>
</protein>
<keyword id="KW-0217">Developmental protein</keyword>
<keyword id="KW-0238">DNA-binding</keyword>
<keyword id="KW-0371">Homeobox</keyword>
<keyword id="KW-0524">Neurogenesis</keyword>
<keyword id="KW-0539">Nucleus</keyword>
<keyword id="KW-1185">Reference proteome</keyword>
<keyword id="KW-0678">Repressor</keyword>
<keyword id="KW-0804">Transcription</keyword>
<keyword id="KW-0805">Transcription regulation</keyword>
<gene>
    <name evidence="6" type="primary">pnx</name>
</gene>
<comment type="function">
    <text evidence="5">Transcriptional repressor. Activity as a repressor is enhanced by binding to the corepressor tle3a.</text>
</comment>
<comment type="subunit">
    <text evidence="5">Interacts with tle3a.</text>
</comment>
<comment type="subcellular location">
    <subcellularLocation>
        <location evidence="1 2 3 5">Nucleus</location>
    </subcellularLocation>
</comment>
<comment type="developmental stage">
    <text evidence="5">Detected in the presumptive ectoderm at the late blastula stage. During the gastrula stage, expression refines to the ventrolateral ectoderm and the dorsal-midline ectoderm. Expressed in primary neurons during the segmentation stage, with strongest expression in primary motoneurons and interneurons and lower expression in Rohon-Beard neurons. The expression domain is restricted to regions posterior of rhombomere 4. During the late segmentation and pharyngula stages, expression decreases in an anterior-to-posterior direction and is largely absent by 48 hours post-fertilization.</text>
</comment>
<comment type="disruption phenotype">
    <text evidence="5">Morpholino knockdown of the protein results in impaired neurogenesis in posterior regions. Expression of the neural precursor marker ngn1 is reduced at the one- to three-somite stage. At later stages, there is a significant reduction in islet1-expressing primary motoneurons and defective axon outgrowth from motoneurons. Formation of Rohon-Beard neurons is initially abnormal but later recovers. Development of secondary neurons is not affected.</text>
</comment>
<comment type="similarity">
    <text evidence="7">Belongs to the NK-1 homeobox family.</text>
</comment>
<evidence type="ECO:0000255" key="1"/>
<evidence type="ECO:0000255" key="2">
    <source>
        <dbReference type="PROSITE-ProRule" id="PRU00108"/>
    </source>
</evidence>
<evidence type="ECO:0000255" key="3">
    <source>
        <dbReference type="RuleBase" id="RU000682"/>
    </source>
</evidence>
<evidence type="ECO:0000256" key="4">
    <source>
        <dbReference type="SAM" id="MobiDB-lite"/>
    </source>
</evidence>
<evidence type="ECO:0000269" key="5">
    <source>
    </source>
</evidence>
<evidence type="ECO:0000303" key="6">
    <source>
    </source>
</evidence>
<evidence type="ECO:0000305" key="7"/>
<evidence type="ECO:0000312" key="8">
    <source>
        <dbReference type="EMBL" id="AAI62069.1"/>
    </source>
</evidence>
<evidence type="ECO:0000312" key="9">
    <source>
        <dbReference type="EMBL" id="BAC54031.1"/>
    </source>
</evidence>
<evidence type="ECO:0000312" key="10">
    <source>
        <dbReference type="Proteomes" id="UP000000437"/>
    </source>
</evidence>
<proteinExistence type="evidence at protein level"/>
<accession>F1R2J1</accession>
<accession>Q8AXR6</accession>
<sequence length="182" mass="20704">MHEETSNSTLQGKTSFSIADILDPAKFNGTRETREISNNRESPKTTSPTQDPSAPNIANASAAKVKSKRIRTAFTLDQLRILERSFQSSHYLSVFERHCIASALGLSETQVKIWFQNRRTKWKKELDGHGGEEQSHCAPTALTQNPIMYALPGHHANHHVHYYPQQTHYLNTSFHPQTLMMY</sequence>
<feature type="chain" id="PRO_0000442136" description="Homeobox protein pnx">
    <location>
        <begin position="1"/>
        <end position="182"/>
    </location>
</feature>
<feature type="DNA-binding region" description="Homeobox" evidence="2">
    <location>
        <begin position="67"/>
        <end position="126"/>
    </location>
</feature>
<feature type="region of interest" description="Important for interaction with tle3a" evidence="5">
    <location>
        <begin position="1"/>
        <end position="34"/>
    </location>
</feature>
<feature type="region of interest" description="Disordered" evidence="4">
    <location>
        <begin position="24"/>
        <end position="63"/>
    </location>
</feature>
<feature type="compositionally biased region" description="Basic and acidic residues" evidence="4">
    <location>
        <begin position="29"/>
        <end position="43"/>
    </location>
</feature>
<feature type="compositionally biased region" description="Low complexity" evidence="4">
    <location>
        <begin position="52"/>
        <end position="63"/>
    </location>
</feature>
<feature type="sequence conflict" description="In Ref. 1; BAC54031 and 3; AAI62069/AAI62454." evidence="7" ref="1 3">
    <original>D</original>
    <variation>E</variation>
    <location>
        <position position="51"/>
    </location>
</feature>
<feature type="sequence conflict" description="In Ref. 1; BAC54031 and 3; AAI62069/AAI62454." evidence="7" ref="1 3">
    <original>T</original>
    <variation>M</variation>
    <location>
        <position position="178"/>
    </location>
</feature>
<organism evidence="10">
    <name type="scientific">Danio rerio</name>
    <name type="common">Zebrafish</name>
    <name type="synonym">Brachydanio rerio</name>
    <dbReference type="NCBI Taxonomy" id="7955"/>
    <lineage>
        <taxon>Eukaryota</taxon>
        <taxon>Metazoa</taxon>
        <taxon>Chordata</taxon>
        <taxon>Craniata</taxon>
        <taxon>Vertebrata</taxon>
        <taxon>Euteleostomi</taxon>
        <taxon>Actinopterygii</taxon>
        <taxon>Neopterygii</taxon>
        <taxon>Teleostei</taxon>
        <taxon>Ostariophysi</taxon>
        <taxon>Cypriniformes</taxon>
        <taxon>Danionidae</taxon>
        <taxon>Danioninae</taxon>
        <taxon>Danio</taxon>
    </lineage>
</organism>